<feature type="signal peptide" evidence="3">
    <location>
        <begin position="1"/>
        <end position="18"/>
    </location>
</feature>
<feature type="propeptide" id="PRO_0000033938" evidence="3">
    <location>
        <begin position="19"/>
        <end position="266"/>
    </location>
</feature>
<feature type="chain" id="PRO_0000033939" description="Growth/differentiation factor 8">
    <location>
        <begin position="267"/>
        <end position="375"/>
    </location>
</feature>
<feature type="site" description="Cleavage" evidence="1">
    <location>
        <begin position="98"/>
        <end position="99"/>
    </location>
</feature>
<feature type="glycosylation site" description="N-linked (GlcNAc...) asparagine" evidence="3">
    <location>
        <position position="47"/>
    </location>
</feature>
<feature type="glycosylation site" description="N-linked (GlcNAc...) asparagine" evidence="3">
    <location>
        <position position="71"/>
    </location>
</feature>
<feature type="disulfide bond" evidence="2">
    <location>
        <begin position="272"/>
        <end position="282"/>
    </location>
</feature>
<feature type="disulfide bond" evidence="2">
    <location>
        <begin position="281"/>
        <end position="340"/>
    </location>
</feature>
<feature type="disulfide bond" evidence="2">
    <location>
        <begin position="309"/>
        <end position="372"/>
    </location>
</feature>
<feature type="disulfide bond" evidence="2">
    <location>
        <begin position="313"/>
        <end position="374"/>
    </location>
</feature>
<feature type="disulfide bond" description="Interchain" evidence="2">
    <location>
        <position position="339"/>
    </location>
</feature>
<proteinExistence type="evidence at transcript level"/>
<sequence>MQKLQISVYIYLFMLIVAGPVDLNENSEQKENVEKEGLCNACLWRENTTSSRLEAIKIQILSKLRLETAPNISKDAIRQLLPKAPPLLELIDQFDVQRDAGSDGSLEDDDYHARTDAVITMPTESDLLTQVEGKPKCCFFQFSSKIQYNKLVKAQLWIYLRPVKTPATVFVQILRLIKPMKDGTRYTGIRSLKLDMNPGTGIWQSIDVKTVLQNWLKQPESNLGIEIKALDENGHDLAVTFPEPGEDGLTPFLEVKVTDTPKRSRRDFGLDCDERSTESRCCRYPLTVDFEAFGWDWIIAPKRYKANYCSGECEFVFLQKYPHTHLVHQANPRGSAGPCCTPTKMSPINMLYFNGEGQIIYGKIPAMVVDRCGCS</sequence>
<organism>
    <name type="scientific">Bubalus bubalis</name>
    <name type="common">Domestic water buffalo</name>
    <dbReference type="NCBI Taxonomy" id="89462"/>
    <lineage>
        <taxon>Eukaryota</taxon>
        <taxon>Metazoa</taxon>
        <taxon>Chordata</taxon>
        <taxon>Craniata</taxon>
        <taxon>Vertebrata</taxon>
        <taxon>Euteleostomi</taxon>
        <taxon>Mammalia</taxon>
        <taxon>Eutheria</taxon>
        <taxon>Laurasiatheria</taxon>
        <taxon>Artiodactyla</taxon>
        <taxon>Ruminantia</taxon>
        <taxon>Pecora</taxon>
        <taxon>Bovidae</taxon>
        <taxon>Bovinae</taxon>
        <taxon>Bubalus</taxon>
    </lineage>
</organism>
<dbReference type="EMBL" id="AY254098">
    <property type="protein sequence ID" value="AAQ98602.1"/>
    <property type="molecule type" value="Genomic_DNA"/>
</dbReference>
<dbReference type="EMBL" id="AY363177">
    <property type="protein sequence ID" value="AAQ98602.1"/>
    <property type="status" value="JOINED"/>
    <property type="molecule type" value="Genomic_DNA"/>
</dbReference>
<dbReference type="EMBL" id="AY363178">
    <property type="protein sequence ID" value="AAQ98602.1"/>
    <property type="status" value="JOINED"/>
    <property type="molecule type" value="Genomic_DNA"/>
</dbReference>
<dbReference type="EMBL" id="AY854497">
    <property type="protein sequence ID" value="AAW50584.1"/>
    <property type="molecule type" value="Genomic_DNA"/>
</dbReference>
<dbReference type="EMBL" id="AY854495">
    <property type="protein sequence ID" value="AAW50584.1"/>
    <property type="status" value="JOINED"/>
    <property type="molecule type" value="Genomic_DNA"/>
</dbReference>
<dbReference type="EMBL" id="AY854496">
    <property type="protein sequence ID" value="AAW50584.1"/>
    <property type="status" value="JOINED"/>
    <property type="molecule type" value="Genomic_DNA"/>
</dbReference>
<dbReference type="EMBL" id="DQ091762">
    <property type="protein sequence ID" value="AAY98351.1"/>
    <property type="molecule type" value="Genomic_DNA"/>
</dbReference>
<dbReference type="EMBL" id="DQ159987">
    <property type="protein sequence ID" value="AAZ86073.1"/>
    <property type="molecule type" value="mRNA"/>
</dbReference>
<dbReference type="RefSeq" id="NP_001277896.1">
    <property type="nucleotide sequence ID" value="NM_001290967.1"/>
</dbReference>
<dbReference type="SMR" id="Q6X5V1"/>
<dbReference type="GlyCosmos" id="Q6X5V1">
    <property type="glycosylation" value="2 sites, No reported glycans"/>
</dbReference>
<dbReference type="GeneID" id="102414042"/>
<dbReference type="KEGG" id="bbub:102414042"/>
<dbReference type="CTD" id="2660"/>
<dbReference type="OrthoDB" id="5948587at2759"/>
<dbReference type="GO" id="GO:0005615">
    <property type="term" value="C:extracellular space"/>
    <property type="evidence" value="ECO:0007669"/>
    <property type="project" value="UniProtKB-KW"/>
</dbReference>
<dbReference type="GO" id="GO:0005125">
    <property type="term" value="F:cytokine activity"/>
    <property type="evidence" value="ECO:0007669"/>
    <property type="project" value="UniProtKB-KW"/>
</dbReference>
<dbReference type="GO" id="GO:0008083">
    <property type="term" value="F:growth factor activity"/>
    <property type="evidence" value="ECO:0007669"/>
    <property type="project" value="UniProtKB-KW"/>
</dbReference>
<dbReference type="GO" id="GO:0008201">
    <property type="term" value="F:heparin binding"/>
    <property type="evidence" value="ECO:0007669"/>
    <property type="project" value="UniProtKB-KW"/>
</dbReference>
<dbReference type="GO" id="GO:0042802">
    <property type="term" value="F:identical protein binding"/>
    <property type="evidence" value="ECO:0000250"/>
    <property type="project" value="UniProtKB"/>
</dbReference>
<dbReference type="GO" id="GO:0014839">
    <property type="term" value="P:myoblast migration involved in skeletal muscle regeneration"/>
    <property type="evidence" value="ECO:0000250"/>
    <property type="project" value="UniProtKB"/>
</dbReference>
<dbReference type="GO" id="GO:0010592">
    <property type="term" value="P:positive regulation of lamellipodium assembly"/>
    <property type="evidence" value="ECO:0000250"/>
    <property type="project" value="UniProtKB"/>
</dbReference>
<dbReference type="GO" id="GO:0010759">
    <property type="term" value="P:positive regulation of macrophage chemotaxis"/>
    <property type="evidence" value="ECO:0000250"/>
    <property type="project" value="UniProtKB"/>
</dbReference>
<dbReference type="CDD" id="cd19388">
    <property type="entry name" value="TGF_beta_GDF8"/>
    <property type="match status" value="1"/>
</dbReference>
<dbReference type="FunFam" id="2.60.120.970:FF:000001">
    <property type="entry name" value="Growth/differentiation factor 8"/>
    <property type="match status" value="1"/>
</dbReference>
<dbReference type="FunFam" id="2.10.90.10:FF:000006">
    <property type="entry name" value="growth/differentiation factor 8"/>
    <property type="match status" value="1"/>
</dbReference>
<dbReference type="Gene3D" id="2.60.120.970">
    <property type="match status" value="1"/>
</dbReference>
<dbReference type="Gene3D" id="2.10.90.10">
    <property type="entry name" value="Cystine-knot cytokines"/>
    <property type="match status" value="1"/>
</dbReference>
<dbReference type="InterPro" id="IPR029034">
    <property type="entry name" value="Cystine-knot_cytokine"/>
</dbReference>
<dbReference type="InterPro" id="IPR001839">
    <property type="entry name" value="TGF-b_C"/>
</dbReference>
<dbReference type="InterPro" id="IPR001111">
    <property type="entry name" value="TGF-b_propeptide"/>
</dbReference>
<dbReference type="InterPro" id="IPR015615">
    <property type="entry name" value="TGF-beta-rel"/>
</dbReference>
<dbReference type="InterPro" id="IPR017948">
    <property type="entry name" value="TGFb_CS"/>
</dbReference>
<dbReference type="PANTHER" id="PTHR11848:SF150">
    <property type="entry name" value="GROWTH_DIFFERENTIATION FACTOR 8"/>
    <property type="match status" value="1"/>
</dbReference>
<dbReference type="PANTHER" id="PTHR11848">
    <property type="entry name" value="TGF-BETA FAMILY"/>
    <property type="match status" value="1"/>
</dbReference>
<dbReference type="Pfam" id="PF00019">
    <property type="entry name" value="TGF_beta"/>
    <property type="match status" value="1"/>
</dbReference>
<dbReference type="Pfam" id="PF00688">
    <property type="entry name" value="TGFb_propeptide"/>
    <property type="match status" value="1"/>
</dbReference>
<dbReference type="SMART" id="SM00204">
    <property type="entry name" value="TGFB"/>
    <property type="match status" value="1"/>
</dbReference>
<dbReference type="SUPFAM" id="SSF57501">
    <property type="entry name" value="Cystine-knot cytokines"/>
    <property type="match status" value="1"/>
</dbReference>
<dbReference type="PROSITE" id="PS00250">
    <property type="entry name" value="TGF_BETA_1"/>
    <property type="match status" value="1"/>
</dbReference>
<dbReference type="PROSITE" id="PS51362">
    <property type="entry name" value="TGF_BETA_2"/>
    <property type="match status" value="1"/>
</dbReference>
<name>GDF8_BUBBU</name>
<gene>
    <name type="primary">MSTN</name>
    <name type="synonym">GDF8</name>
</gene>
<reference key="1">
    <citation type="submission" date="2003-03" db="EMBL/GenBank/DDBJ databases">
        <authorList>
            <person name="Mota L.S.L.S."/>
            <person name="Curi R.A."/>
            <person name="Palmieri D.A."/>
            <person name="Braga G.U.L."/>
            <person name="Borges A.S."/>
        </authorList>
    </citation>
    <scope>NUCLEOTIDE SEQUENCE [GENOMIC DNA]</scope>
</reference>
<reference key="2">
    <citation type="submission" date="2004-12" db="EMBL/GenBank/DDBJ databases">
        <title>Myostatin exon 3 in Murrah buffaloes.</title>
        <authorList>
            <person name="Vijh R.K."/>
            <person name="Bharani Kumar S.T."/>
            <person name="Mishra B."/>
            <person name="Tantia M.S."/>
        </authorList>
    </citation>
    <scope>NUCLEOTIDE SEQUENCE [GENOMIC DNA]</scope>
    <source>
        <strain>Murrah</strain>
    </source>
</reference>
<reference key="3">
    <citation type="submission" date="2005-06" db="EMBL/GenBank/DDBJ databases">
        <title>Myostatin (GDF8) gene of Bubalus bubalis.</title>
        <authorList>
            <person name="Vijh R.K."/>
            <person name="Bharani Kumar S.T."/>
            <person name="Mishra B."/>
            <person name="Tantia M.S."/>
        </authorList>
    </citation>
    <scope>NUCLEOTIDE SEQUENCE [GENOMIC DNA]</scope>
</reference>
<reference key="4">
    <citation type="submission" date="2005-08" db="EMBL/GenBank/DDBJ databases">
        <title>Myostatin mRNA of Bubalus bubalis.</title>
        <authorList>
            <person name="Mishra B."/>
            <person name="Vijh R.K."/>
            <person name="Tantia M.S."/>
            <person name="Bharani Kumar S.T."/>
        </authorList>
    </citation>
    <scope>NUCLEOTIDE SEQUENCE [MRNA]</scope>
    <source>
        <tissue>Skeletal muscle</tissue>
    </source>
</reference>
<keyword id="KW-0165">Cleavage on pair of basic residues</keyword>
<keyword id="KW-0202">Cytokine</keyword>
<keyword id="KW-1015">Disulfide bond</keyword>
<keyword id="KW-0325">Glycoprotein</keyword>
<keyword id="KW-0339">Growth factor</keyword>
<keyword id="KW-0358">Heparin-binding</keyword>
<keyword id="KW-0964">Secreted</keyword>
<keyword id="KW-0732">Signal</keyword>
<accession>Q6X5V1</accession>
<accession>Q4JH08</accession>
<evidence type="ECO:0000250" key="1">
    <source>
        <dbReference type="UniProtKB" id="O08689"/>
    </source>
</evidence>
<evidence type="ECO:0000250" key="2">
    <source>
        <dbReference type="UniProtKB" id="O14793"/>
    </source>
</evidence>
<evidence type="ECO:0000255" key="3"/>
<evidence type="ECO:0000305" key="4"/>
<comment type="function">
    <text evidence="1">Acts specifically as a negative regulator of skeletal muscle growth.</text>
</comment>
<comment type="subunit">
    <text evidence="1">Homodimer; disulfide-linked. Interacts with WFIKKN2, leading to inhibit its activity. Interacts with FSTL3.</text>
</comment>
<comment type="subcellular location">
    <subcellularLocation>
        <location evidence="1">Secreted</location>
    </subcellularLocation>
</comment>
<comment type="PTM">
    <text evidence="1">Synthesized as large precursor molecule that undergoes proteolytic cleavage to generate an N-terminal propeptide and a disulfide linked C-terminal dimer, which is the biologically active molecule. The circulating form consists of a latent complex of the C-terminal dimer and other proteins, including its propeptide, which maintain the C-terminal dimer in a latent, inactive state. Ligand activation requires additional cleavage of the prodomain by a tolloid-like metalloproteinase.</text>
</comment>
<comment type="similarity">
    <text evidence="4">Belongs to the TGF-beta family.</text>
</comment>
<protein>
    <recommendedName>
        <fullName>Growth/differentiation factor 8</fullName>
        <shortName>GDF-8</shortName>
    </recommendedName>
    <alternativeName>
        <fullName>Myostatin</fullName>
    </alternativeName>
</protein>